<name>RL14_ELUMP</name>
<accession>B2KEL1</accession>
<sequence length="122" mass="13585">MIQLRSIINVADNSGARKVQCFKVRGGHHRDIATLGDVIMCSVRDAIPTSSIKKGDVVRAVVVRVAREKRRKDGSYIRFDENAVCIINENGEPKGTRVFGPIARELRDKNFLKIISLAPEVI</sequence>
<proteinExistence type="inferred from homology"/>
<protein>
    <recommendedName>
        <fullName evidence="1">Large ribosomal subunit protein uL14</fullName>
    </recommendedName>
    <alternativeName>
        <fullName evidence="2">50S ribosomal protein L14</fullName>
    </alternativeName>
</protein>
<keyword id="KW-1185">Reference proteome</keyword>
<keyword id="KW-0687">Ribonucleoprotein</keyword>
<keyword id="KW-0689">Ribosomal protein</keyword>
<keyword id="KW-0694">RNA-binding</keyword>
<keyword id="KW-0699">rRNA-binding</keyword>
<feature type="chain" id="PRO_1000144270" description="Large ribosomal subunit protein uL14">
    <location>
        <begin position="1"/>
        <end position="122"/>
    </location>
</feature>
<evidence type="ECO:0000255" key="1">
    <source>
        <dbReference type="HAMAP-Rule" id="MF_01367"/>
    </source>
</evidence>
<evidence type="ECO:0000305" key="2"/>
<reference key="1">
    <citation type="journal article" date="2009" name="Appl. Environ. Microbiol.">
        <title>Genomic analysis of 'Elusimicrobium minutum,' the first cultivated representative of the phylum 'Elusimicrobia' (formerly termite group 1).</title>
        <authorList>
            <person name="Herlemann D.P.R."/>
            <person name="Geissinger O."/>
            <person name="Ikeda-Ohtsubo W."/>
            <person name="Kunin V."/>
            <person name="Sun H."/>
            <person name="Lapidus A."/>
            <person name="Hugenholtz P."/>
            <person name="Brune A."/>
        </authorList>
    </citation>
    <scope>NUCLEOTIDE SEQUENCE [LARGE SCALE GENOMIC DNA]</scope>
    <source>
        <strain>Pei191</strain>
    </source>
</reference>
<comment type="function">
    <text evidence="1">Binds to 23S rRNA. Forms part of two intersubunit bridges in the 70S ribosome.</text>
</comment>
<comment type="subunit">
    <text evidence="1">Part of the 50S ribosomal subunit. Forms a cluster with proteins L3 and L19. In the 70S ribosome, L14 and L19 interact and together make contacts with the 16S rRNA in bridges B5 and B8.</text>
</comment>
<comment type="similarity">
    <text evidence="1">Belongs to the universal ribosomal protein uL14 family.</text>
</comment>
<organism>
    <name type="scientific">Elusimicrobium minutum (strain Pei191)</name>
    <dbReference type="NCBI Taxonomy" id="445932"/>
    <lineage>
        <taxon>Bacteria</taxon>
        <taxon>Pseudomonadati</taxon>
        <taxon>Elusimicrobiota</taxon>
        <taxon>Elusimicrobia</taxon>
        <taxon>Elusimicrobiales</taxon>
        <taxon>Elusimicrobiaceae</taxon>
        <taxon>Elusimicrobium</taxon>
    </lineage>
</organism>
<gene>
    <name evidence="1" type="primary">rplN</name>
    <name type="ordered locus">Emin_1408</name>
</gene>
<dbReference type="EMBL" id="CP001055">
    <property type="protein sequence ID" value="ACC98957.1"/>
    <property type="molecule type" value="Genomic_DNA"/>
</dbReference>
<dbReference type="RefSeq" id="WP_012415572.1">
    <property type="nucleotide sequence ID" value="NC_010644.1"/>
</dbReference>
<dbReference type="SMR" id="B2KEL1"/>
<dbReference type="STRING" id="445932.Emin_1408"/>
<dbReference type="KEGG" id="emi:Emin_1408"/>
<dbReference type="HOGENOM" id="CLU_095071_2_1_0"/>
<dbReference type="OrthoDB" id="9806379at2"/>
<dbReference type="Proteomes" id="UP000001029">
    <property type="component" value="Chromosome"/>
</dbReference>
<dbReference type="GO" id="GO:0022625">
    <property type="term" value="C:cytosolic large ribosomal subunit"/>
    <property type="evidence" value="ECO:0007669"/>
    <property type="project" value="TreeGrafter"/>
</dbReference>
<dbReference type="GO" id="GO:0070180">
    <property type="term" value="F:large ribosomal subunit rRNA binding"/>
    <property type="evidence" value="ECO:0007669"/>
    <property type="project" value="TreeGrafter"/>
</dbReference>
<dbReference type="GO" id="GO:0003735">
    <property type="term" value="F:structural constituent of ribosome"/>
    <property type="evidence" value="ECO:0007669"/>
    <property type="project" value="InterPro"/>
</dbReference>
<dbReference type="GO" id="GO:0006412">
    <property type="term" value="P:translation"/>
    <property type="evidence" value="ECO:0007669"/>
    <property type="project" value="UniProtKB-UniRule"/>
</dbReference>
<dbReference type="CDD" id="cd00337">
    <property type="entry name" value="Ribosomal_uL14"/>
    <property type="match status" value="1"/>
</dbReference>
<dbReference type="Gene3D" id="2.40.150.20">
    <property type="entry name" value="Ribosomal protein L14"/>
    <property type="match status" value="1"/>
</dbReference>
<dbReference type="HAMAP" id="MF_01367">
    <property type="entry name" value="Ribosomal_uL14"/>
    <property type="match status" value="1"/>
</dbReference>
<dbReference type="InterPro" id="IPR000218">
    <property type="entry name" value="Ribosomal_uL14"/>
</dbReference>
<dbReference type="InterPro" id="IPR005745">
    <property type="entry name" value="Ribosomal_uL14_bac-type"/>
</dbReference>
<dbReference type="InterPro" id="IPR036853">
    <property type="entry name" value="Ribosomal_uL14_sf"/>
</dbReference>
<dbReference type="NCBIfam" id="TIGR01067">
    <property type="entry name" value="rplN_bact"/>
    <property type="match status" value="1"/>
</dbReference>
<dbReference type="PANTHER" id="PTHR11761">
    <property type="entry name" value="50S/60S RIBOSOMAL PROTEIN L14/L23"/>
    <property type="match status" value="1"/>
</dbReference>
<dbReference type="PANTHER" id="PTHR11761:SF3">
    <property type="entry name" value="LARGE RIBOSOMAL SUBUNIT PROTEIN UL14M"/>
    <property type="match status" value="1"/>
</dbReference>
<dbReference type="Pfam" id="PF00238">
    <property type="entry name" value="Ribosomal_L14"/>
    <property type="match status" value="1"/>
</dbReference>
<dbReference type="SMART" id="SM01374">
    <property type="entry name" value="Ribosomal_L14"/>
    <property type="match status" value="1"/>
</dbReference>
<dbReference type="SUPFAM" id="SSF50193">
    <property type="entry name" value="Ribosomal protein L14"/>
    <property type="match status" value="1"/>
</dbReference>